<proteinExistence type="inferred from homology"/>
<gene>
    <name evidence="1" type="primary">rpsT</name>
    <name type="ordered locus">Mlut_12430</name>
</gene>
<feature type="chain" id="PRO_1000206505" description="Small ribosomal subunit protein bS20">
    <location>
        <begin position="1"/>
        <end position="88"/>
    </location>
</feature>
<comment type="function">
    <text evidence="1">Binds directly to 16S ribosomal RNA.</text>
</comment>
<comment type="similarity">
    <text evidence="1">Belongs to the bacterial ribosomal protein bS20 family.</text>
</comment>
<protein>
    <recommendedName>
        <fullName evidence="1">Small ribosomal subunit protein bS20</fullName>
    </recommendedName>
    <alternativeName>
        <fullName evidence="2">30S ribosomal protein S20</fullName>
    </alternativeName>
</protein>
<evidence type="ECO:0000255" key="1">
    <source>
        <dbReference type="HAMAP-Rule" id="MF_00500"/>
    </source>
</evidence>
<evidence type="ECO:0000305" key="2"/>
<sequence>MANIKSQKKRILTNEKARQRNVAVKSELKTAIRAVDKAVAAGEAEAAAAALRTASRKLDKAASKGVIHKNQAANRKSGIAARVKALLG</sequence>
<accession>C5CCD6</accession>
<keyword id="KW-1185">Reference proteome</keyword>
<keyword id="KW-0687">Ribonucleoprotein</keyword>
<keyword id="KW-0689">Ribosomal protein</keyword>
<keyword id="KW-0694">RNA-binding</keyword>
<keyword id="KW-0699">rRNA-binding</keyword>
<dbReference type="EMBL" id="CP001628">
    <property type="protein sequence ID" value="ACS30748.1"/>
    <property type="molecule type" value="Genomic_DNA"/>
</dbReference>
<dbReference type="RefSeq" id="WP_002854699.1">
    <property type="nucleotide sequence ID" value="NZ_WBMF01000079.1"/>
</dbReference>
<dbReference type="SMR" id="C5CCD6"/>
<dbReference type="STRING" id="465515.Mlut_12430"/>
<dbReference type="EnsemblBacteria" id="ACS30748">
    <property type="protein sequence ID" value="ACS30748"/>
    <property type="gene ID" value="Mlut_12430"/>
</dbReference>
<dbReference type="GeneID" id="93362505"/>
<dbReference type="KEGG" id="mlu:Mlut_12430"/>
<dbReference type="eggNOG" id="COG0268">
    <property type="taxonomic scope" value="Bacteria"/>
</dbReference>
<dbReference type="HOGENOM" id="CLU_160655_0_1_11"/>
<dbReference type="Proteomes" id="UP000000738">
    <property type="component" value="Chromosome"/>
</dbReference>
<dbReference type="GO" id="GO:0005829">
    <property type="term" value="C:cytosol"/>
    <property type="evidence" value="ECO:0007669"/>
    <property type="project" value="TreeGrafter"/>
</dbReference>
<dbReference type="GO" id="GO:0015935">
    <property type="term" value="C:small ribosomal subunit"/>
    <property type="evidence" value="ECO:0007669"/>
    <property type="project" value="TreeGrafter"/>
</dbReference>
<dbReference type="GO" id="GO:0070181">
    <property type="term" value="F:small ribosomal subunit rRNA binding"/>
    <property type="evidence" value="ECO:0007669"/>
    <property type="project" value="TreeGrafter"/>
</dbReference>
<dbReference type="GO" id="GO:0003735">
    <property type="term" value="F:structural constituent of ribosome"/>
    <property type="evidence" value="ECO:0007669"/>
    <property type="project" value="InterPro"/>
</dbReference>
<dbReference type="GO" id="GO:0006412">
    <property type="term" value="P:translation"/>
    <property type="evidence" value="ECO:0007669"/>
    <property type="project" value="UniProtKB-UniRule"/>
</dbReference>
<dbReference type="FunFam" id="1.20.58.110:FF:000001">
    <property type="entry name" value="30S ribosomal protein S20"/>
    <property type="match status" value="1"/>
</dbReference>
<dbReference type="Gene3D" id="1.20.58.110">
    <property type="entry name" value="Ribosomal protein S20"/>
    <property type="match status" value="1"/>
</dbReference>
<dbReference type="HAMAP" id="MF_00500">
    <property type="entry name" value="Ribosomal_bS20"/>
    <property type="match status" value="1"/>
</dbReference>
<dbReference type="InterPro" id="IPR002583">
    <property type="entry name" value="Ribosomal_bS20"/>
</dbReference>
<dbReference type="InterPro" id="IPR036510">
    <property type="entry name" value="Ribosomal_bS20_sf"/>
</dbReference>
<dbReference type="NCBIfam" id="TIGR00029">
    <property type="entry name" value="S20"/>
    <property type="match status" value="1"/>
</dbReference>
<dbReference type="PANTHER" id="PTHR33398">
    <property type="entry name" value="30S RIBOSOMAL PROTEIN S20"/>
    <property type="match status" value="1"/>
</dbReference>
<dbReference type="PANTHER" id="PTHR33398:SF1">
    <property type="entry name" value="SMALL RIBOSOMAL SUBUNIT PROTEIN BS20C"/>
    <property type="match status" value="1"/>
</dbReference>
<dbReference type="Pfam" id="PF01649">
    <property type="entry name" value="Ribosomal_S20p"/>
    <property type="match status" value="1"/>
</dbReference>
<dbReference type="SUPFAM" id="SSF46992">
    <property type="entry name" value="Ribosomal protein S20"/>
    <property type="match status" value="1"/>
</dbReference>
<reference key="1">
    <citation type="journal article" date="2010" name="J. Bacteriol.">
        <title>Genome sequence of the Fleming strain of Micrococcus luteus, a simple free-living actinobacterium.</title>
        <authorList>
            <person name="Young M."/>
            <person name="Artsatbanov V."/>
            <person name="Beller H.R."/>
            <person name="Chandra G."/>
            <person name="Chater K.F."/>
            <person name="Dover L.G."/>
            <person name="Goh E.B."/>
            <person name="Kahan T."/>
            <person name="Kaprelyants A.S."/>
            <person name="Kyrpides N."/>
            <person name="Lapidus A."/>
            <person name="Lowry S.R."/>
            <person name="Lykidis A."/>
            <person name="Mahillon J."/>
            <person name="Markowitz V."/>
            <person name="Mavromatis K."/>
            <person name="Mukamolova G.V."/>
            <person name="Oren A."/>
            <person name="Rokem J.S."/>
            <person name="Smith M.C."/>
            <person name="Young D.I."/>
            <person name="Greenblatt C.L."/>
        </authorList>
    </citation>
    <scope>NUCLEOTIDE SEQUENCE [LARGE SCALE GENOMIC DNA]</scope>
    <source>
        <strain>ATCC 4698 / DSM 20030 / JCM 1464 / CCM 169 / CCUG 5858 / IAM 1056 / NBRC 3333 / NCIMB 9278 / NCTC 2665 / VKM Ac-2230</strain>
    </source>
</reference>
<organism>
    <name type="scientific">Micrococcus luteus (strain ATCC 4698 / DSM 20030 / JCM 1464 / CCM 169 / CCUG 5858 / IAM 1056 / NBRC 3333 / NCIMB 9278 / NCTC 2665 / VKM Ac-2230)</name>
    <name type="common">Micrococcus lysodeikticus</name>
    <dbReference type="NCBI Taxonomy" id="465515"/>
    <lineage>
        <taxon>Bacteria</taxon>
        <taxon>Bacillati</taxon>
        <taxon>Actinomycetota</taxon>
        <taxon>Actinomycetes</taxon>
        <taxon>Micrococcales</taxon>
        <taxon>Micrococcaceae</taxon>
        <taxon>Micrococcus</taxon>
    </lineage>
</organism>
<name>RS20_MICLC</name>